<evidence type="ECO:0000256" key="1">
    <source>
        <dbReference type="SAM" id="MobiDB-lite"/>
    </source>
</evidence>
<evidence type="ECO:0000305" key="2"/>
<comment type="caution">
    <text evidence="2">Product of a dubious CDS prediction.</text>
</comment>
<reference key="1">
    <citation type="journal article" date="2004" name="Nat. Genet.">
        <title>Complete sequencing and characterization of 21,243 full-length human cDNAs.</title>
        <authorList>
            <person name="Ota T."/>
            <person name="Suzuki Y."/>
            <person name="Nishikawa T."/>
            <person name="Otsuki T."/>
            <person name="Sugiyama T."/>
            <person name="Irie R."/>
            <person name="Wakamatsu A."/>
            <person name="Hayashi K."/>
            <person name="Sato H."/>
            <person name="Nagai K."/>
            <person name="Kimura K."/>
            <person name="Makita H."/>
            <person name="Sekine M."/>
            <person name="Obayashi M."/>
            <person name="Nishi T."/>
            <person name="Shibahara T."/>
            <person name="Tanaka T."/>
            <person name="Ishii S."/>
            <person name="Yamamoto J."/>
            <person name="Saito K."/>
            <person name="Kawai Y."/>
            <person name="Isono Y."/>
            <person name="Nakamura Y."/>
            <person name="Nagahari K."/>
            <person name="Murakami K."/>
            <person name="Yasuda T."/>
            <person name="Iwayanagi T."/>
            <person name="Wagatsuma M."/>
            <person name="Shiratori A."/>
            <person name="Sudo H."/>
            <person name="Hosoiri T."/>
            <person name="Kaku Y."/>
            <person name="Kodaira H."/>
            <person name="Kondo H."/>
            <person name="Sugawara M."/>
            <person name="Takahashi M."/>
            <person name="Kanda K."/>
            <person name="Yokoi T."/>
            <person name="Furuya T."/>
            <person name="Kikkawa E."/>
            <person name="Omura Y."/>
            <person name="Abe K."/>
            <person name="Kamihara K."/>
            <person name="Katsuta N."/>
            <person name="Sato K."/>
            <person name="Tanikawa M."/>
            <person name="Yamazaki M."/>
            <person name="Ninomiya K."/>
            <person name="Ishibashi T."/>
            <person name="Yamashita H."/>
            <person name="Murakawa K."/>
            <person name="Fujimori K."/>
            <person name="Tanai H."/>
            <person name="Kimata M."/>
            <person name="Watanabe M."/>
            <person name="Hiraoka S."/>
            <person name="Chiba Y."/>
            <person name="Ishida S."/>
            <person name="Ono Y."/>
            <person name="Takiguchi S."/>
            <person name="Watanabe S."/>
            <person name="Yosida M."/>
            <person name="Hotuta T."/>
            <person name="Kusano J."/>
            <person name="Kanehori K."/>
            <person name="Takahashi-Fujii A."/>
            <person name="Hara H."/>
            <person name="Tanase T.-O."/>
            <person name="Nomura Y."/>
            <person name="Togiya S."/>
            <person name="Komai F."/>
            <person name="Hara R."/>
            <person name="Takeuchi K."/>
            <person name="Arita M."/>
            <person name="Imose N."/>
            <person name="Musashino K."/>
            <person name="Yuuki H."/>
            <person name="Oshima A."/>
            <person name="Sasaki N."/>
            <person name="Aotsuka S."/>
            <person name="Yoshikawa Y."/>
            <person name="Matsunawa H."/>
            <person name="Ichihara T."/>
            <person name="Shiohata N."/>
            <person name="Sano S."/>
            <person name="Moriya S."/>
            <person name="Momiyama H."/>
            <person name="Satoh N."/>
            <person name="Takami S."/>
            <person name="Terashima Y."/>
            <person name="Suzuki O."/>
            <person name="Nakagawa S."/>
            <person name="Senoh A."/>
            <person name="Mizoguchi H."/>
            <person name="Goto Y."/>
            <person name="Shimizu F."/>
            <person name="Wakebe H."/>
            <person name="Hishigaki H."/>
            <person name="Watanabe T."/>
            <person name="Sugiyama A."/>
            <person name="Takemoto M."/>
            <person name="Kawakami B."/>
            <person name="Yamazaki M."/>
            <person name="Watanabe K."/>
            <person name="Kumagai A."/>
            <person name="Itakura S."/>
            <person name="Fukuzumi Y."/>
            <person name="Fujimori Y."/>
            <person name="Komiyama M."/>
            <person name="Tashiro H."/>
            <person name="Tanigami A."/>
            <person name="Fujiwara T."/>
            <person name="Ono T."/>
            <person name="Yamada K."/>
            <person name="Fujii Y."/>
            <person name="Ozaki K."/>
            <person name="Hirao M."/>
            <person name="Ohmori Y."/>
            <person name="Kawabata A."/>
            <person name="Hikiji T."/>
            <person name="Kobatake N."/>
            <person name="Inagaki H."/>
            <person name="Ikema Y."/>
            <person name="Okamoto S."/>
            <person name="Okitani R."/>
            <person name="Kawakami T."/>
            <person name="Noguchi S."/>
            <person name="Itoh T."/>
            <person name="Shigeta K."/>
            <person name="Senba T."/>
            <person name="Matsumura K."/>
            <person name="Nakajima Y."/>
            <person name="Mizuno T."/>
            <person name="Morinaga M."/>
            <person name="Sasaki M."/>
            <person name="Togashi T."/>
            <person name="Oyama M."/>
            <person name="Hata H."/>
            <person name="Watanabe M."/>
            <person name="Komatsu T."/>
            <person name="Mizushima-Sugano J."/>
            <person name="Satoh T."/>
            <person name="Shirai Y."/>
            <person name="Takahashi Y."/>
            <person name="Nakagawa K."/>
            <person name="Okumura K."/>
            <person name="Nagase T."/>
            <person name="Nomura N."/>
            <person name="Kikuchi H."/>
            <person name="Masuho Y."/>
            <person name="Yamashita R."/>
            <person name="Nakai K."/>
            <person name="Yada T."/>
            <person name="Nakamura Y."/>
            <person name="Ohara O."/>
            <person name="Isogai T."/>
            <person name="Sugano S."/>
        </authorList>
    </citation>
    <scope>NUCLEOTIDE SEQUENCE [LARGE SCALE MRNA]</scope>
</reference>
<accession>Q8NBF4</accession>
<dbReference type="EMBL" id="AK090626">
    <property type="status" value="NOT_ANNOTATED_CDS"/>
    <property type="molecule type" value="mRNA"/>
</dbReference>
<dbReference type="GlyGen" id="Q8NBF4">
    <property type="glycosylation" value="1 site"/>
</dbReference>
<dbReference type="BioMuta" id="-"/>
<dbReference type="neXtProt" id="NX_Q8NBF4"/>
<dbReference type="InParanoid" id="Q8NBF4"/>
<dbReference type="PAN-GO" id="Q8NBF4">
    <property type="GO annotations" value="0 GO annotations based on evolutionary models"/>
</dbReference>
<dbReference type="Pharos" id="Q8NBF4">
    <property type="development level" value="Tdark"/>
</dbReference>
<dbReference type="Proteomes" id="UP000005640">
    <property type="component" value="Unplaced"/>
</dbReference>
<dbReference type="RNAct" id="Q8NBF4">
    <property type="molecule type" value="protein"/>
</dbReference>
<proteinExistence type="uncertain"/>
<sequence>MQLLQVRTTNTLRRLPGTPLMPSAGAVRVVASVQSGHSWWRMWDGPTGAAEAGSCAEMLRTSAPGTSRPNLSFLLGQVIPLAHTGSVETLPSEESWGCRQRASPLPPSTAPMAVSASHRGGTGTRTWLVDPTLSRDTSPLGGQSWGSPQPSRGA</sequence>
<keyword id="KW-1185">Reference proteome</keyword>
<protein>
    <recommendedName>
        <fullName>Putative uncharacterized protein FLJ33307</fullName>
    </recommendedName>
</protein>
<organism>
    <name type="scientific">Homo sapiens</name>
    <name type="common">Human</name>
    <dbReference type="NCBI Taxonomy" id="9606"/>
    <lineage>
        <taxon>Eukaryota</taxon>
        <taxon>Metazoa</taxon>
        <taxon>Chordata</taxon>
        <taxon>Craniata</taxon>
        <taxon>Vertebrata</taxon>
        <taxon>Euteleostomi</taxon>
        <taxon>Mammalia</taxon>
        <taxon>Eutheria</taxon>
        <taxon>Euarchontoglires</taxon>
        <taxon>Primates</taxon>
        <taxon>Haplorrhini</taxon>
        <taxon>Catarrhini</taxon>
        <taxon>Hominidae</taxon>
        <taxon>Homo</taxon>
    </lineage>
</organism>
<feature type="chain" id="PRO_0000318911" description="Putative uncharacterized protein FLJ33307">
    <location>
        <begin position="1"/>
        <end position="154"/>
    </location>
</feature>
<feature type="region of interest" description="Disordered" evidence="1">
    <location>
        <begin position="91"/>
        <end position="154"/>
    </location>
</feature>
<feature type="compositionally biased region" description="Polar residues" evidence="1">
    <location>
        <begin position="134"/>
        <end position="154"/>
    </location>
</feature>
<name>YG006_HUMAN</name>